<keyword id="KW-0342">GTP-binding</keyword>
<keyword id="KW-0378">Hydrolase</keyword>
<keyword id="KW-0479">Metal-binding</keyword>
<keyword id="KW-0547">Nucleotide-binding</keyword>
<keyword id="KW-0686">Riboflavin biosynthesis</keyword>
<keyword id="KW-0862">Zinc</keyword>
<organism>
    <name type="scientific">Buchnera aphidicola subsp. Schizaphis graminum (strain Sg)</name>
    <dbReference type="NCBI Taxonomy" id="198804"/>
    <lineage>
        <taxon>Bacteria</taxon>
        <taxon>Pseudomonadati</taxon>
        <taxon>Pseudomonadota</taxon>
        <taxon>Gammaproteobacteria</taxon>
        <taxon>Enterobacterales</taxon>
        <taxon>Erwiniaceae</taxon>
        <taxon>Buchnera</taxon>
    </lineage>
</organism>
<evidence type="ECO:0000255" key="1">
    <source>
        <dbReference type="HAMAP-Rule" id="MF_00179"/>
    </source>
</evidence>
<name>RIBA_BUCAP</name>
<gene>
    <name evidence="1" type="primary">ribA</name>
    <name type="ordered locus">BUsg_261</name>
</gene>
<dbReference type="EC" id="3.5.4.25" evidence="1"/>
<dbReference type="EMBL" id="AE013218">
    <property type="protein sequence ID" value="AAM67819.1"/>
    <property type="molecule type" value="Genomic_DNA"/>
</dbReference>
<dbReference type="RefSeq" id="WP_011053786.1">
    <property type="nucleotide sequence ID" value="NC_004061.1"/>
</dbReference>
<dbReference type="SMR" id="Q8K9Q0"/>
<dbReference type="STRING" id="198804.BUsg_261"/>
<dbReference type="GeneID" id="93003731"/>
<dbReference type="KEGG" id="bas:BUsg_261"/>
<dbReference type="eggNOG" id="COG0807">
    <property type="taxonomic scope" value="Bacteria"/>
</dbReference>
<dbReference type="HOGENOM" id="CLU_020273_2_1_6"/>
<dbReference type="UniPathway" id="UPA00275">
    <property type="reaction ID" value="UER00400"/>
</dbReference>
<dbReference type="Proteomes" id="UP000000416">
    <property type="component" value="Chromosome"/>
</dbReference>
<dbReference type="GO" id="GO:0005829">
    <property type="term" value="C:cytosol"/>
    <property type="evidence" value="ECO:0007669"/>
    <property type="project" value="TreeGrafter"/>
</dbReference>
<dbReference type="GO" id="GO:0005525">
    <property type="term" value="F:GTP binding"/>
    <property type="evidence" value="ECO:0007669"/>
    <property type="project" value="UniProtKB-KW"/>
</dbReference>
<dbReference type="GO" id="GO:0003935">
    <property type="term" value="F:GTP cyclohydrolase II activity"/>
    <property type="evidence" value="ECO:0007669"/>
    <property type="project" value="UniProtKB-UniRule"/>
</dbReference>
<dbReference type="GO" id="GO:0008270">
    <property type="term" value="F:zinc ion binding"/>
    <property type="evidence" value="ECO:0007669"/>
    <property type="project" value="UniProtKB-UniRule"/>
</dbReference>
<dbReference type="GO" id="GO:0009231">
    <property type="term" value="P:riboflavin biosynthetic process"/>
    <property type="evidence" value="ECO:0007669"/>
    <property type="project" value="UniProtKB-UniRule"/>
</dbReference>
<dbReference type="CDD" id="cd00641">
    <property type="entry name" value="GTP_cyclohydro2"/>
    <property type="match status" value="1"/>
</dbReference>
<dbReference type="FunFam" id="3.40.50.10990:FF:000002">
    <property type="entry name" value="GTP cyclohydrolase-2"/>
    <property type="match status" value="1"/>
</dbReference>
<dbReference type="Gene3D" id="3.40.50.10990">
    <property type="entry name" value="GTP cyclohydrolase II"/>
    <property type="match status" value="1"/>
</dbReference>
<dbReference type="HAMAP" id="MF_00179">
    <property type="entry name" value="RibA"/>
    <property type="match status" value="1"/>
</dbReference>
<dbReference type="InterPro" id="IPR032677">
    <property type="entry name" value="GTP_cyclohydro_II"/>
</dbReference>
<dbReference type="InterPro" id="IPR000926">
    <property type="entry name" value="RibA"/>
</dbReference>
<dbReference type="InterPro" id="IPR036144">
    <property type="entry name" value="RibA-like_sf"/>
</dbReference>
<dbReference type="NCBIfam" id="NF001591">
    <property type="entry name" value="PRK00393.1"/>
    <property type="match status" value="1"/>
</dbReference>
<dbReference type="NCBIfam" id="TIGR00505">
    <property type="entry name" value="ribA"/>
    <property type="match status" value="1"/>
</dbReference>
<dbReference type="PANTHER" id="PTHR21327:SF18">
    <property type="entry name" value="3,4-DIHYDROXY-2-BUTANONE 4-PHOSPHATE SYNTHASE"/>
    <property type="match status" value="1"/>
</dbReference>
<dbReference type="PANTHER" id="PTHR21327">
    <property type="entry name" value="GTP CYCLOHYDROLASE II-RELATED"/>
    <property type="match status" value="1"/>
</dbReference>
<dbReference type="Pfam" id="PF00925">
    <property type="entry name" value="GTP_cyclohydro2"/>
    <property type="match status" value="1"/>
</dbReference>
<dbReference type="SUPFAM" id="SSF142695">
    <property type="entry name" value="RibA-like"/>
    <property type="match status" value="1"/>
</dbReference>
<accession>Q8K9Q0</accession>
<feature type="chain" id="PRO_0000151751" description="GTP cyclohydrolase-2">
    <location>
        <begin position="1"/>
        <end position="196"/>
    </location>
</feature>
<feature type="active site" description="Proton acceptor" evidence="1">
    <location>
        <position position="126"/>
    </location>
</feature>
<feature type="active site" description="Nucleophile" evidence="1">
    <location>
        <position position="128"/>
    </location>
</feature>
<feature type="binding site" evidence="1">
    <location>
        <begin position="49"/>
        <end position="53"/>
    </location>
    <ligand>
        <name>GTP</name>
        <dbReference type="ChEBI" id="CHEBI:37565"/>
    </ligand>
</feature>
<feature type="binding site" evidence="1">
    <location>
        <position position="54"/>
    </location>
    <ligand>
        <name>Zn(2+)</name>
        <dbReference type="ChEBI" id="CHEBI:29105"/>
        <note>catalytic</note>
    </ligand>
</feature>
<feature type="binding site" evidence="1">
    <location>
        <position position="65"/>
    </location>
    <ligand>
        <name>Zn(2+)</name>
        <dbReference type="ChEBI" id="CHEBI:29105"/>
        <note>catalytic</note>
    </ligand>
</feature>
<feature type="binding site" evidence="1">
    <location>
        <position position="67"/>
    </location>
    <ligand>
        <name>Zn(2+)</name>
        <dbReference type="ChEBI" id="CHEBI:29105"/>
        <note>catalytic</note>
    </ligand>
</feature>
<feature type="binding site" evidence="1">
    <location>
        <position position="70"/>
    </location>
    <ligand>
        <name>GTP</name>
        <dbReference type="ChEBI" id="CHEBI:37565"/>
    </ligand>
</feature>
<feature type="binding site" evidence="1">
    <location>
        <begin position="92"/>
        <end position="94"/>
    </location>
    <ligand>
        <name>GTP</name>
        <dbReference type="ChEBI" id="CHEBI:37565"/>
    </ligand>
</feature>
<feature type="binding site" evidence="1">
    <location>
        <position position="114"/>
    </location>
    <ligand>
        <name>GTP</name>
        <dbReference type="ChEBI" id="CHEBI:37565"/>
    </ligand>
</feature>
<feature type="binding site" evidence="1">
    <location>
        <position position="149"/>
    </location>
    <ligand>
        <name>GTP</name>
        <dbReference type="ChEBI" id="CHEBI:37565"/>
    </ligand>
</feature>
<feature type="binding site" evidence="1">
    <location>
        <position position="154"/>
    </location>
    <ligand>
        <name>GTP</name>
        <dbReference type="ChEBI" id="CHEBI:37565"/>
    </ligand>
</feature>
<reference key="1">
    <citation type="journal article" date="2002" name="Science">
        <title>50 million years of genomic stasis in endosymbiotic bacteria.</title>
        <authorList>
            <person name="Tamas I."/>
            <person name="Klasson L."/>
            <person name="Canbaeck B."/>
            <person name="Naeslund A.K."/>
            <person name="Eriksson A.-S."/>
            <person name="Wernegreen J.J."/>
            <person name="Sandstroem J.P."/>
            <person name="Moran N.A."/>
            <person name="Andersson S.G.E."/>
        </authorList>
    </citation>
    <scope>NUCLEOTIDE SEQUENCE [LARGE SCALE GENOMIC DNA]</scope>
    <source>
        <strain>Sg</strain>
    </source>
</reference>
<proteinExistence type="inferred from homology"/>
<protein>
    <recommendedName>
        <fullName evidence="1">GTP cyclohydrolase-2</fullName>
        <ecNumber evidence="1">3.5.4.25</ecNumber>
    </recommendedName>
    <alternativeName>
        <fullName evidence="1">GTP cyclohydrolase II</fullName>
    </alternativeName>
</protein>
<comment type="function">
    <text evidence="1">Catalyzes the conversion of GTP to 2,5-diamino-6-ribosylamino-4(3H)-pyrimidinone 5'-phosphate (DARP), formate and pyrophosphate.</text>
</comment>
<comment type="catalytic activity">
    <reaction evidence="1">
        <text>GTP + 4 H2O = 2,5-diamino-6-hydroxy-4-(5-phosphoribosylamino)-pyrimidine + formate + 2 phosphate + 3 H(+)</text>
        <dbReference type="Rhea" id="RHEA:23704"/>
        <dbReference type="ChEBI" id="CHEBI:15377"/>
        <dbReference type="ChEBI" id="CHEBI:15378"/>
        <dbReference type="ChEBI" id="CHEBI:15740"/>
        <dbReference type="ChEBI" id="CHEBI:37565"/>
        <dbReference type="ChEBI" id="CHEBI:43474"/>
        <dbReference type="ChEBI" id="CHEBI:58614"/>
        <dbReference type="EC" id="3.5.4.25"/>
    </reaction>
</comment>
<comment type="cofactor">
    <cofactor evidence="1">
        <name>Zn(2+)</name>
        <dbReference type="ChEBI" id="CHEBI:29105"/>
    </cofactor>
    <text evidence="1">Binds 1 zinc ion per subunit.</text>
</comment>
<comment type="pathway">
    <text evidence="1">Cofactor biosynthesis; riboflavin biosynthesis; 5-amino-6-(D-ribitylamino)uracil from GTP: step 1/4.</text>
</comment>
<comment type="subunit">
    <text evidence="1">Homodimer.</text>
</comment>
<comment type="similarity">
    <text evidence="1">Belongs to the GTP cyclohydrolase II family.</text>
</comment>
<sequence>MQLIQIEKAILPTPWGDFLIFGFEEKKNGKNHIALVYGKIKKNIPILARIHSECLTGDAFFSLRCDCGIQLEMAMSRIASEGNGILIYHRQEGRNIGLLNKIKAYSLQDKGLDTVEANQKLGFSADERDFSLCADIFNILNIKKIRLLTNNPFKVDMLIASGIEIVERIPIIVEKNDKNAHYLKTKAEKMGHLLFK</sequence>